<protein>
    <recommendedName>
        <fullName evidence="1">UDP-N-acetylmuramate--L-alanine ligase</fullName>
        <ecNumber evidence="1">6.3.2.8</ecNumber>
    </recommendedName>
    <alternativeName>
        <fullName evidence="1">UDP-N-acetylmuramoyl-L-alanine synthetase</fullName>
    </alternativeName>
</protein>
<accession>Q2YLY6</accession>
<feature type="chain" id="PRO_0000242546" description="UDP-N-acetylmuramate--L-alanine ligase">
    <location>
        <begin position="1"/>
        <end position="471"/>
    </location>
</feature>
<feature type="binding site" evidence="1">
    <location>
        <begin position="114"/>
        <end position="120"/>
    </location>
    <ligand>
        <name>ATP</name>
        <dbReference type="ChEBI" id="CHEBI:30616"/>
    </ligand>
</feature>
<reference key="1">
    <citation type="journal article" date="2005" name="Infect. Immun.">
        <title>Whole-genome analyses of speciation events in pathogenic Brucellae.</title>
        <authorList>
            <person name="Chain P.S."/>
            <person name="Comerci D.J."/>
            <person name="Tolmasky M.E."/>
            <person name="Larimer F.W."/>
            <person name="Malfatti S.A."/>
            <person name="Vergez L.M."/>
            <person name="Aguero F."/>
            <person name="Land M.L."/>
            <person name="Ugalde R.A."/>
            <person name="Garcia E."/>
        </authorList>
    </citation>
    <scope>NUCLEOTIDE SEQUENCE [LARGE SCALE GENOMIC DNA]</scope>
    <source>
        <strain>2308</strain>
    </source>
</reference>
<name>MURC_BRUA2</name>
<keyword id="KW-0067">ATP-binding</keyword>
<keyword id="KW-0131">Cell cycle</keyword>
<keyword id="KW-0132">Cell division</keyword>
<keyword id="KW-0133">Cell shape</keyword>
<keyword id="KW-0961">Cell wall biogenesis/degradation</keyword>
<keyword id="KW-0963">Cytoplasm</keyword>
<keyword id="KW-0436">Ligase</keyword>
<keyword id="KW-0547">Nucleotide-binding</keyword>
<keyword id="KW-0573">Peptidoglycan synthesis</keyword>
<keyword id="KW-1185">Reference proteome</keyword>
<sequence length="471" mass="50794">MKMPLNIGLVHFIGIGGIGMSGIAEVLHNLGYKVQGSDQSDSANVQRLREKGIEVFVGHKAENLGDAEVIVVSTAIKKNNPELVAAREKLLPVVRRAEMLAELMRFRRAVAIGGTHGKTTTTSLVAALLDAGHLDPTVINGGIINAYGTNARMGDGDWMVVEADESDGTFLKLPADIAVVTNIDPEHLDHYGNFDAVRAAFRQFVENVPFYGFGVMCLDHPEVQALVSRIEDRRIITYGSNPQAEVRFVNQRMDGAASLFDVVIRSRKGEATEIKDLRLPMPGLHNVSNATAAIAVAHELGISSDDIRRGLGSFGGVKRRFTHTGSWNGVEIFDDYGHHPVEIRAVLKAAREATSQAGGRVVAIVQPHRYTRLASLFDEFAACFNDADTVIVAPVYTAGEEPIEGVNSEELVSRIKTAGHRDARYATGPEALAPLVASIAQAGDFVVCLGAGNVTQWAYALPKELAEQGKK</sequence>
<dbReference type="EC" id="6.3.2.8" evidence="1"/>
<dbReference type="EMBL" id="AM040264">
    <property type="protein sequence ID" value="CAJ11405.1"/>
    <property type="molecule type" value="Genomic_DNA"/>
</dbReference>
<dbReference type="RefSeq" id="WP_002964538.1">
    <property type="nucleotide sequence ID" value="NZ_KN046823.1"/>
</dbReference>
<dbReference type="SMR" id="Q2YLY6"/>
<dbReference type="STRING" id="359391.BAB1_1449"/>
<dbReference type="GeneID" id="97533364"/>
<dbReference type="KEGG" id="bmf:BAB1_1449"/>
<dbReference type="PATRIC" id="fig|359391.11.peg.900"/>
<dbReference type="HOGENOM" id="CLU_028104_2_2_5"/>
<dbReference type="PhylomeDB" id="Q2YLY6"/>
<dbReference type="UniPathway" id="UPA00219"/>
<dbReference type="Proteomes" id="UP000002719">
    <property type="component" value="Chromosome I"/>
</dbReference>
<dbReference type="GO" id="GO:0005737">
    <property type="term" value="C:cytoplasm"/>
    <property type="evidence" value="ECO:0007669"/>
    <property type="project" value="UniProtKB-SubCell"/>
</dbReference>
<dbReference type="GO" id="GO:0005524">
    <property type="term" value="F:ATP binding"/>
    <property type="evidence" value="ECO:0007669"/>
    <property type="project" value="UniProtKB-UniRule"/>
</dbReference>
<dbReference type="GO" id="GO:0008763">
    <property type="term" value="F:UDP-N-acetylmuramate-L-alanine ligase activity"/>
    <property type="evidence" value="ECO:0007669"/>
    <property type="project" value="UniProtKB-UniRule"/>
</dbReference>
<dbReference type="GO" id="GO:0051301">
    <property type="term" value="P:cell division"/>
    <property type="evidence" value="ECO:0007669"/>
    <property type="project" value="UniProtKB-KW"/>
</dbReference>
<dbReference type="GO" id="GO:0071555">
    <property type="term" value="P:cell wall organization"/>
    <property type="evidence" value="ECO:0007669"/>
    <property type="project" value="UniProtKB-KW"/>
</dbReference>
<dbReference type="GO" id="GO:0009252">
    <property type="term" value="P:peptidoglycan biosynthetic process"/>
    <property type="evidence" value="ECO:0007669"/>
    <property type="project" value="UniProtKB-UniRule"/>
</dbReference>
<dbReference type="GO" id="GO:0008360">
    <property type="term" value="P:regulation of cell shape"/>
    <property type="evidence" value="ECO:0007669"/>
    <property type="project" value="UniProtKB-KW"/>
</dbReference>
<dbReference type="Gene3D" id="3.90.190.20">
    <property type="entry name" value="Mur ligase, C-terminal domain"/>
    <property type="match status" value="1"/>
</dbReference>
<dbReference type="Gene3D" id="3.40.1190.10">
    <property type="entry name" value="Mur-like, catalytic domain"/>
    <property type="match status" value="1"/>
</dbReference>
<dbReference type="Gene3D" id="3.40.50.720">
    <property type="entry name" value="NAD(P)-binding Rossmann-like Domain"/>
    <property type="match status" value="1"/>
</dbReference>
<dbReference type="HAMAP" id="MF_00046">
    <property type="entry name" value="MurC"/>
    <property type="match status" value="1"/>
</dbReference>
<dbReference type="InterPro" id="IPR036565">
    <property type="entry name" value="Mur-like_cat_sf"/>
</dbReference>
<dbReference type="InterPro" id="IPR004101">
    <property type="entry name" value="Mur_ligase_C"/>
</dbReference>
<dbReference type="InterPro" id="IPR036615">
    <property type="entry name" value="Mur_ligase_C_dom_sf"/>
</dbReference>
<dbReference type="InterPro" id="IPR013221">
    <property type="entry name" value="Mur_ligase_cen"/>
</dbReference>
<dbReference type="InterPro" id="IPR000713">
    <property type="entry name" value="Mur_ligase_N"/>
</dbReference>
<dbReference type="InterPro" id="IPR050061">
    <property type="entry name" value="MurCDEF_pg_biosynth"/>
</dbReference>
<dbReference type="InterPro" id="IPR005758">
    <property type="entry name" value="UDP-N-AcMur_Ala_ligase_MurC"/>
</dbReference>
<dbReference type="NCBIfam" id="TIGR01082">
    <property type="entry name" value="murC"/>
    <property type="match status" value="1"/>
</dbReference>
<dbReference type="PANTHER" id="PTHR43445:SF3">
    <property type="entry name" value="UDP-N-ACETYLMURAMATE--L-ALANINE LIGASE"/>
    <property type="match status" value="1"/>
</dbReference>
<dbReference type="PANTHER" id="PTHR43445">
    <property type="entry name" value="UDP-N-ACETYLMURAMATE--L-ALANINE LIGASE-RELATED"/>
    <property type="match status" value="1"/>
</dbReference>
<dbReference type="Pfam" id="PF01225">
    <property type="entry name" value="Mur_ligase"/>
    <property type="match status" value="1"/>
</dbReference>
<dbReference type="Pfam" id="PF02875">
    <property type="entry name" value="Mur_ligase_C"/>
    <property type="match status" value="1"/>
</dbReference>
<dbReference type="Pfam" id="PF08245">
    <property type="entry name" value="Mur_ligase_M"/>
    <property type="match status" value="1"/>
</dbReference>
<dbReference type="SUPFAM" id="SSF51984">
    <property type="entry name" value="MurCD N-terminal domain"/>
    <property type="match status" value="1"/>
</dbReference>
<dbReference type="SUPFAM" id="SSF53623">
    <property type="entry name" value="MurD-like peptide ligases, catalytic domain"/>
    <property type="match status" value="1"/>
</dbReference>
<dbReference type="SUPFAM" id="SSF53244">
    <property type="entry name" value="MurD-like peptide ligases, peptide-binding domain"/>
    <property type="match status" value="1"/>
</dbReference>
<gene>
    <name evidence="1" type="primary">murC</name>
    <name type="ordered locus">BAB1_1449</name>
</gene>
<organism>
    <name type="scientific">Brucella abortus (strain 2308)</name>
    <dbReference type="NCBI Taxonomy" id="359391"/>
    <lineage>
        <taxon>Bacteria</taxon>
        <taxon>Pseudomonadati</taxon>
        <taxon>Pseudomonadota</taxon>
        <taxon>Alphaproteobacteria</taxon>
        <taxon>Hyphomicrobiales</taxon>
        <taxon>Brucellaceae</taxon>
        <taxon>Brucella/Ochrobactrum group</taxon>
        <taxon>Brucella</taxon>
    </lineage>
</organism>
<evidence type="ECO:0000255" key="1">
    <source>
        <dbReference type="HAMAP-Rule" id="MF_00046"/>
    </source>
</evidence>
<comment type="function">
    <text evidence="1">Cell wall formation.</text>
</comment>
<comment type="catalytic activity">
    <reaction evidence="1">
        <text>UDP-N-acetyl-alpha-D-muramate + L-alanine + ATP = UDP-N-acetyl-alpha-D-muramoyl-L-alanine + ADP + phosphate + H(+)</text>
        <dbReference type="Rhea" id="RHEA:23372"/>
        <dbReference type="ChEBI" id="CHEBI:15378"/>
        <dbReference type="ChEBI" id="CHEBI:30616"/>
        <dbReference type="ChEBI" id="CHEBI:43474"/>
        <dbReference type="ChEBI" id="CHEBI:57972"/>
        <dbReference type="ChEBI" id="CHEBI:70757"/>
        <dbReference type="ChEBI" id="CHEBI:83898"/>
        <dbReference type="ChEBI" id="CHEBI:456216"/>
        <dbReference type="EC" id="6.3.2.8"/>
    </reaction>
</comment>
<comment type="pathway">
    <text evidence="1">Cell wall biogenesis; peptidoglycan biosynthesis.</text>
</comment>
<comment type="subcellular location">
    <subcellularLocation>
        <location evidence="1">Cytoplasm</location>
    </subcellularLocation>
</comment>
<comment type="similarity">
    <text evidence="1">Belongs to the MurCDEF family.</text>
</comment>
<proteinExistence type="inferred from homology"/>